<comment type="function">
    <text evidence="1">Required for the maintenance of the structure of the mitochondrial inner membrane. Involved in mitochondrial morphology. Causes growth arrest when highly overexpressed (By similarity).</text>
</comment>
<comment type="subunit">
    <text evidence="1">Homooligomer.</text>
</comment>
<comment type="subcellular location">
    <subcellularLocation>
        <location evidence="1">Mitochondrion inner membrane</location>
        <topology evidence="1">Multi-pass membrane protein</topology>
    </subcellularLocation>
</comment>
<comment type="similarity">
    <text evidence="4">Belongs to the SHE9 family.</text>
</comment>
<dbReference type="EMBL" id="CH476624">
    <property type="protein sequence ID" value="EDO01172.1"/>
    <property type="molecule type" value="Genomic_DNA"/>
</dbReference>
<dbReference type="RefSeq" id="XP_001595557.1">
    <property type="nucleotide sequence ID" value="XM_001595507.1"/>
</dbReference>
<dbReference type="SMR" id="A7EEA6"/>
<dbReference type="EnsemblFungi" id="EDO01172">
    <property type="protein sequence ID" value="EDO01172"/>
    <property type="gene ID" value="SS1G_03646"/>
</dbReference>
<dbReference type="GeneID" id="5491963"/>
<dbReference type="KEGG" id="ssl:SS1G_03646"/>
<dbReference type="VEuPathDB" id="FungiDB:sscle_09g074580"/>
<dbReference type="eggNOG" id="ENOG502QQ1E">
    <property type="taxonomic scope" value="Eukaryota"/>
</dbReference>
<dbReference type="HOGENOM" id="CLU_025632_2_1_1"/>
<dbReference type="InParanoid" id="A7EEA6"/>
<dbReference type="OMA" id="PACIRCQ"/>
<dbReference type="OrthoDB" id="5595506at2759"/>
<dbReference type="Proteomes" id="UP000001312">
    <property type="component" value="Unassembled WGS sequence"/>
</dbReference>
<dbReference type="GO" id="GO:0005743">
    <property type="term" value="C:mitochondrial inner membrane"/>
    <property type="evidence" value="ECO:0000318"/>
    <property type="project" value="GO_Central"/>
</dbReference>
<dbReference type="GO" id="GO:0007007">
    <property type="term" value="P:inner mitochondrial membrane organization"/>
    <property type="evidence" value="ECO:0000318"/>
    <property type="project" value="GO_Central"/>
</dbReference>
<dbReference type="InterPro" id="IPR008839">
    <property type="entry name" value="MDM33_fungi"/>
</dbReference>
<dbReference type="PANTHER" id="PTHR31961">
    <property type="entry name" value="SENSITIVE TO HIGH EXPRESSION PROTEIN 9, MITOCHONDRIAL"/>
    <property type="match status" value="1"/>
</dbReference>
<dbReference type="PANTHER" id="PTHR31961:SF3">
    <property type="entry name" value="SENSITIVE TO HIGH EXPRESSION PROTEIN 9, MITOCHONDRIAL"/>
    <property type="match status" value="1"/>
</dbReference>
<dbReference type="Pfam" id="PF05546">
    <property type="entry name" value="She9_MDM33"/>
    <property type="match status" value="1"/>
</dbReference>
<sequence>MVSVIEAHNTQWSELHRAQHPNILSLSQYLILPIDVRKREKSSARHNSSERGRQLSIAMQPLTRLIPRFAIDSGSASISRSLRISPRPSLKSSICLQCRIYSPSLRRHFADDQRPIIEPPPHLRPKVTPPEDPKPQPQPEEEKPASIPEYSKQDDSPSPQLERDRELPSTLESRRLAMTKKLSHLMDHMQGNIFIASQRINDLTGYSGIEALKNKITNLEAQVASSKELVRSTRLHYKTTVADRASSQREVTTLLARKDTWTPADLERFTHLYRMDHTNEQAVQEAATRLADAEREAEKAAGELSSSILSRYHEEQIWSDKIRRMSTWGTWGLMGVNVLLFLVFQFGFEPWRRRRLVAGFEEKVREALEQEKTLAMSTAIRGAEIGGGEGSEVSLDEIVAAEVQELKEEALVEGLGEPAVEAVAATIEGEVPHHESNNEPAQEIGEAAAAMDTAELNIPYSRPPPFDYRNIESWKEKMEAGKAAAIDLWSTRQVSITKKDITIIALEGAAGGAVLAGAIFTFIIRRS</sequence>
<accession>A7EEA6</accession>
<reference key="1">
    <citation type="journal article" date="2011" name="PLoS Genet.">
        <title>Genomic analysis of the necrotrophic fungal pathogens Sclerotinia sclerotiorum and Botrytis cinerea.</title>
        <authorList>
            <person name="Amselem J."/>
            <person name="Cuomo C.A."/>
            <person name="van Kan J.A.L."/>
            <person name="Viaud M."/>
            <person name="Benito E.P."/>
            <person name="Couloux A."/>
            <person name="Coutinho P.M."/>
            <person name="de Vries R.P."/>
            <person name="Dyer P.S."/>
            <person name="Fillinger S."/>
            <person name="Fournier E."/>
            <person name="Gout L."/>
            <person name="Hahn M."/>
            <person name="Kohn L."/>
            <person name="Lapalu N."/>
            <person name="Plummer K.M."/>
            <person name="Pradier J.-M."/>
            <person name="Quevillon E."/>
            <person name="Sharon A."/>
            <person name="Simon A."/>
            <person name="ten Have A."/>
            <person name="Tudzynski B."/>
            <person name="Tudzynski P."/>
            <person name="Wincker P."/>
            <person name="Andrew M."/>
            <person name="Anthouard V."/>
            <person name="Beever R.E."/>
            <person name="Beffa R."/>
            <person name="Benoit I."/>
            <person name="Bouzid O."/>
            <person name="Brault B."/>
            <person name="Chen Z."/>
            <person name="Choquer M."/>
            <person name="Collemare J."/>
            <person name="Cotton P."/>
            <person name="Danchin E.G."/>
            <person name="Da Silva C."/>
            <person name="Gautier A."/>
            <person name="Giraud C."/>
            <person name="Giraud T."/>
            <person name="Gonzalez C."/>
            <person name="Grossetete S."/>
            <person name="Gueldener U."/>
            <person name="Henrissat B."/>
            <person name="Howlett B.J."/>
            <person name="Kodira C."/>
            <person name="Kretschmer M."/>
            <person name="Lappartient A."/>
            <person name="Leroch M."/>
            <person name="Levis C."/>
            <person name="Mauceli E."/>
            <person name="Neuveglise C."/>
            <person name="Oeser B."/>
            <person name="Pearson M."/>
            <person name="Poulain J."/>
            <person name="Poussereau N."/>
            <person name="Quesneville H."/>
            <person name="Rascle C."/>
            <person name="Schumacher J."/>
            <person name="Segurens B."/>
            <person name="Sexton A."/>
            <person name="Silva E."/>
            <person name="Sirven C."/>
            <person name="Soanes D.M."/>
            <person name="Talbot N.J."/>
            <person name="Templeton M."/>
            <person name="Yandava C."/>
            <person name="Yarden O."/>
            <person name="Zeng Q."/>
            <person name="Rollins J.A."/>
            <person name="Lebrun M.-H."/>
            <person name="Dickman M."/>
        </authorList>
    </citation>
    <scope>NUCLEOTIDE SEQUENCE [LARGE SCALE GENOMIC DNA]</scope>
    <source>
        <strain>ATCC 18683 / 1980 / Ss-1</strain>
    </source>
</reference>
<protein>
    <recommendedName>
        <fullName>Sensitive to high expression protein 9 homolog, mitochondrial</fullName>
    </recommendedName>
</protein>
<feature type="transit peptide" description="Mitochondrion" evidence="2">
    <location>
        <begin position="1"/>
        <end status="unknown"/>
    </location>
</feature>
<feature type="chain" id="PRO_0000351064" description="Sensitive to high expression protein 9 homolog, mitochondrial">
    <location>
        <begin status="unknown"/>
        <end position="527"/>
    </location>
</feature>
<feature type="topological domain" description="Mitochondrial matrix" evidence="2">
    <location>
        <begin status="unknown"/>
        <end position="327"/>
    </location>
</feature>
<feature type="transmembrane region" description="Helical" evidence="2">
    <location>
        <begin position="328"/>
        <end position="348"/>
    </location>
</feature>
<feature type="topological domain" description="Mitochondrial intermembrane" evidence="2">
    <location>
        <begin position="349"/>
        <end position="502"/>
    </location>
</feature>
<feature type="transmembrane region" description="Helical" evidence="2">
    <location>
        <begin position="503"/>
        <end position="523"/>
    </location>
</feature>
<feature type="topological domain" description="Mitochondrial matrix" evidence="2">
    <location>
        <begin position="524"/>
        <end position="527"/>
    </location>
</feature>
<feature type="region of interest" description="Disordered" evidence="3">
    <location>
        <begin position="109"/>
        <end position="171"/>
    </location>
</feature>
<feature type="coiled-coil region" evidence="2">
    <location>
        <begin position="277"/>
        <end position="308"/>
    </location>
</feature>
<feature type="compositionally biased region" description="Pro residues" evidence="3">
    <location>
        <begin position="117"/>
        <end position="128"/>
    </location>
</feature>
<feature type="compositionally biased region" description="Basic and acidic residues" evidence="3">
    <location>
        <begin position="129"/>
        <end position="144"/>
    </location>
</feature>
<feature type="compositionally biased region" description="Basic and acidic residues" evidence="3">
    <location>
        <begin position="151"/>
        <end position="171"/>
    </location>
</feature>
<gene>
    <name type="primary">she9</name>
    <name type="ORF">SS1G_03646</name>
</gene>
<keyword id="KW-0175">Coiled coil</keyword>
<keyword id="KW-0472">Membrane</keyword>
<keyword id="KW-0496">Mitochondrion</keyword>
<keyword id="KW-0999">Mitochondrion inner membrane</keyword>
<keyword id="KW-1185">Reference proteome</keyword>
<keyword id="KW-0809">Transit peptide</keyword>
<keyword id="KW-0812">Transmembrane</keyword>
<keyword id="KW-1133">Transmembrane helix</keyword>
<evidence type="ECO:0000250" key="1"/>
<evidence type="ECO:0000255" key="2"/>
<evidence type="ECO:0000256" key="3">
    <source>
        <dbReference type="SAM" id="MobiDB-lite"/>
    </source>
</evidence>
<evidence type="ECO:0000305" key="4"/>
<organism>
    <name type="scientific">Sclerotinia sclerotiorum (strain ATCC 18683 / 1980 / Ss-1)</name>
    <name type="common">White mold</name>
    <name type="synonym">Whetzelinia sclerotiorum</name>
    <dbReference type="NCBI Taxonomy" id="665079"/>
    <lineage>
        <taxon>Eukaryota</taxon>
        <taxon>Fungi</taxon>
        <taxon>Dikarya</taxon>
        <taxon>Ascomycota</taxon>
        <taxon>Pezizomycotina</taxon>
        <taxon>Leotiomycetes</taxon>
        <taxon>Helotiales</taxon>
        <taxon>Sclerotiniaceae</taxon>
        <taxon>Sclerotinia</taxon>
    </lineage>
</organism>
<name>SHE9_SCLS1</name>
<proteinExistence type="inferred from homology"/>